<accession>P30232</accession>
<organism>
    <name type="scientific">Sinapis alba</name>
    <name type="common">White mustard</name>
    <name type="synonym">Brassica hirta</name>
    <dbReference type="NCBI Taxonomy" id="3728"/>
    <lineage>
        <taxon>Eukaryota</taxon>
        <taxon>Viridiplantae</taxon>
        <taxon>Streptophyta</taxon>
        <taxon>Embryophyta</taxon>
        <taxon>Tracheophyta</taxon>
        <taxon>Spermatophyta</taxon>
        <taxon>Magnoliopsida</taxon>
        <taxon>eudicotyledons</taxon>
        <taxon>Gunneridae</taxon>
        <taxon>Pentapetalae</taxon>
        <taxon>rosids</taxon>
        <taxon>malvids</taxon>
        <taxon>Brassicales</taxon>
        <taxon>Brassicaceae</taxon>
        <taxon>Brassiceae</taxon>
        <taxon>Sinapis</taxon>
    </lineage>
</organism>
<dbReference type="PIR" id="S28994">
    <property type="entry name" value="S28994"/>
</dbReference>
<dbReference type="SMR" id="P30232"/>
<dbReference type="iPTMnet" id="P30232"/>
<dbReference type="GO" id="GO:0050832">
    <property type="term" value="P:defense response to fungus"/>
    <property type="evidence" value="ECO:0007669"/>
    <property type="project" value="UniProtKB-KW"/>
</dbReference>
<dbReference type="GO" id="GO:0031640">
    <property type="term" value="P:killing of cells of another organism"/>
    <property type="evidence" value="ECO:0007669"/>
    <property type="project" value="UniProtKB-KW"/>
</dbReference>
<dbReference type="FunFam" id="3.30.30.10:FF:000003">
    <property type="entry name" value="Defensin-like protein 1"/>
    <property type="match status" value="1"/>
</dbReference>
<dbReference type="Gene3D" id="3.30.30.10">
    <property type="entry name" value="Knottin, scorpion toxin-like"/>
    <property type="match status" value="1"/>
</dbReference>
<dbReference type="InterPro" id="IPR008176">
    <property type="entry name" value="Defensin_plant"/>
</dbReference>
<dbReference type="InterPro" id="IPR003614">
    <property type="entry name" value="Scorpion_toxin-like"/>
</dbReference>
<dbReference type="InterPro" id="IPR036574">
    <property type="entry name" value="Scorpion_toxin-like_sf"/>
</dbReference>
<dbReference type="Pfam" id="PF00304">
    <property type="entry name" value="Gamma-thionin"/>
    <property type="match status" value="1"/>
</dbReference>
<dbReference type="SMART" id="SM00505">
    <property type="entry name" value="Knot1"/>
    <property type="match status" value="1"/>
</dbReference>
<dbReference type="SUPFAM" id="SSF57095">
    <property type="entry name" value="Scorpion toxin-like"/>
    <property type="match status" value="1"/>
</dbReference>
<dbReference type="PROSITE" id="PS00940">
    <property type="entry name" value="GAMMA_THIONIN"/>
    <property type="match status" value="1"/>
</dbReference>
<proteinExistence type="evidence at protein level"/>
<protein>
    <recommendedName>
        <fullName>Defensin-like protein 2A</fullName>
    </recommendedName>
    <alternativeName>
        <fullName>Cysteine-rich antifungal protein 2A</fullName>
        <shortName>AFP2A</shortName>
    </alternativeName>
    <alternativeName>
        <fullName>M2A</fullName>
    </alternativeName>
</protein>
<sequence length="51" mass="5722">QKLCQRPSGTWSGVCGNNNACRNQCINLEKARHGSCNYVFPAHKCICYFPC</sequence>
<name>DEF2A_SINAL</name>
<comment type="function">
    <text>Possesses antifungal activity sensitive to inorganic cations.</text>
</comment>
<comment type="subunit">
    <text>Forms oligomers in its native state.</text>
</comment>
<comment type="mass spectrometry" mass="5705.0" error="0.8" method="Electrospray" evidence="3"/>
<comment type="similarity">
    <text evidence="4">Belongs to the DEFL family.</text>
</comment>
<evidence type="ECO:0000250" key="1"/>
<evidence type="ECO:0000269" key="2">
    <source>
    </source>
</evidence>
<evidence type="ECO:0000269" key="3">
    <source>
    </source>
</evidence>
<evidence type="ECO:0000305" key="4"/>
<reference key="1">
    <citation type="journal article" date="1996" name="Int. J. Pept. Protein Res.">
        <title>Purification and mass spectrometry-based sequencing of yellow mustard (Sinapis alba L.) 6 kDa proteins. Identification as antifungal proteins.</title>
        <authorList>
            <person name="Neumann G.M."/>
            <person name="Condron R."/>
            <person name="Polya G.M."/>
        </authorList>
    </citation>
    <scope>PROTEIN SEQUENCE</scope>
    <scope>PHOSPHORYLATION AT SER-8</scope>
    <scope>MASS SPECTROMETRY</scope>
    <source>
        <tissue>Seed</tissue>
    </source>
</reference>
<reference key="2">
    <citation type="journal article" date="1993" name="FEBS Lett.">
        <title>A new family of basic cysteine-rich plant antifungal proteins from Brassicaceae species.</title>
        <authorList>
            <person name="Terras F.R.G."/>
            <person name="Torrekens S."/>
            <person name="van Leuven F."/>
            <person name="Osborn R.W."/>
            <person name="Vanderleyden J."/>
            <person name="Cammue B.P.A."/>
            <person name="Broekaert W.F."/>
        </authorList>
    </citation>
    <scope>PROTEIN SEQUENCE OF 1-26</scope>
    <scope>PYROGLUTAMATE FORMATION AT GLN-1</scope>
    <source>
        <tissue>Seed</tissue>
    </source>
</reference>
<feature type="chain" id="PRO_0000074244" description="Defensin-like protein 2A">
    <location>
        <begin position="1"/>
        <end position="51"/>
    </location>
</feature>
<feature type="modified residue" description="Pyrrolidone carboxylic acid" evidence="2">
    <location>
        <position position="1"/>
    </location>
</feature>
<feature type="modified residue" description="Phosphoserine; by CPK" evidence="3">
    <location>
        <position position="8"/>
    </location>
</feature>
<feature type="disulfide bond" evidence="1">
    <location>
        <begin position="4"/>
        <end position="51"/>
    </location>
</feature>
<feature type="disulfide bond" evidence="1">
    <location>
        <begin position="15"/>
        <end position="36"/>
    </location>
</feature>
<feature type="disulfide bond" evidence="1">
    <location>
        <begin position="21"/>
        <end position="45"/>
    </location>
</feature>
<feature type="disulfide bond" evidence="1">
    <location>
        <begin position="25"/>
        <end position="47"/>
    </location>
</feature>
<keyword id="KW-0929">Antimicrobial</keyword>
<keyword id="KW-0903">Direct protein sequencing</keyword>
<keyword id="KW-1015">Disulfide bond</keyword>
<keyword id="KW-0295">Fungicide</keyword>
<keyword id="KW-0597">Phosphoprotein</keyword>
<keyword id="KW-0873">Pyrrolidone carboxylic acid</keyword>